<organism>
    <name type="scientific">Bordetella parapertussis (strain 12822 / ATCC BAA-587 / NCTC 13253)</name>
    <dbReference type="NCBI Taxonomy" id="257311"/>
    <lineage>
        <taxon>Bacteria</taxon>
        <taxon>Pseudomonadati</taxon>
        <taxon>Pseudomonadota</taxon>
        <taxon>Betaproteobacteria</taxon>
        <taxon>Burkholderiales</taxon>
        <taxon>Alcaligenaceae</taxon>
        <taxon>Bordetella</taxon>
    </lineage>
</organism>
<dbReference type="EMBL" id="BX640436">
    <property type="protein sequence ID" value="CAE39587.1"/>
    <property type="molecule type" value="Genomic_DNA"/>
</dbReference>
<dbReference type="RefSeq" id="WP_010929493.1">
    <property type="nucleotide sequence ID" value="NC_002928.3"/>
</dbReference>
<dbReference type="GeneID" id="69599987"/>
<dbReference type="GeneID" id="93206107"/>
<dbReference type="KEGG" id="bpa:BPP4309"/>
<dbReference type="HOGENOM" id="CLU_155084_1_1_4"/>
<dbReference type="Proteomes" id="UP000001421">
    <property type="component" value="Chromosome"/>
</dbReference>
<dbReference type="GO" id="GO:0005886">
    <property type="term" value="C:plasma membrane"/>
    <property type="evidence" value="ECO:0007669"/>
    <property type="project" value="UniProtKB-SubCell"/>
</dbReference>
<dbReference type="InterPro" id="IPR007039">
    <property type="entry name" value="TrbC/VirB2"/>
</dbReference>
<dbReference type="Pfam" id="PF04956">
    <property type="entry name" value="TrbC"/>
    <property type="match status" value="1"/>
</dbReference>
<evidence type="ECO:0000255" key="1"/>
<evidence type="ECO:0000305" key="2"/>
<sequence>MNPLKDLRASLPRLAFMAACTLLSATLPDLAQAGGGLQRVNHFMASIVVVLRGASVATVTIAIIWAGYKLLFRHADVLDVVRVVLAGLLIGASAEIARYLLT</sequence>
<proteinExistence type="inferred from homology"/>
<keyword id="KW-1003">Cell membrane</keyword>
<keyword id="KW-0472">Membrane</keyword>
<keyword id="KW-0732">Signal</keyword>
<keyword id="KW-0812">Transmembrane</keyword>
<keyword id="KW-1133">Transmembrane helix</keyword>
<name>PTLA_BORPA</name>
<reference key="1">
    <citation type="journal article" date="2003" name="Nat. Genet.">
        <title>Comparative analysis of the genome sequences of Bordetella pertussis, Bordetella parapertussis and Bordetella bronchiseptica.</title>
        <authorList>
            <person name="Parkhill J."/>
            <person name="Sebaihia M."/>
            <person name="Preston A."/>
            <person name="Murphy L.D."/>
            <person name="Thomson N.R."/>
            <person name="Harris D.E."/>
            <person name="Holden M.T.G."/>
            <person name="Churcher C.M."/>
            <person name="Bentley S.D."/>
            <person name="Mungall K.L."/>
            <person name="Cerdeno-Tarraga A.-M."/>
            <person name="Temple L."/>
            <person name="James K.D."/>
            <person name="Harris B."/>
            <person name="Quail M.A."/>
            <person name="Achtman M."/>
            <person name="Atkin R."/>
            <person name="Baker S."/>
            <person name="Basham D."/>
            <person name="Bason N."/>
            <person name="Cherevach I."/>
            <person name="Chillingworth T."/>
            <person name="Collins M."/>
            <person name="Cronin A."/>
            <person name="Davis P."/>
            <person name="Doggett J."/>
            <person name="Feltwell T."/>
            <person name="Goble A."/>
            <person name="Hamlin N."/>
            <person name="Hauser H."/>
            <person name="Holroyd S."/>
            <person name="Jagels K."/>
            <person name="Leather S."/>
            <person name="Moule S."/>
            <person name="Norberczak H."/>
            <person name="O'Neil S."/>
            <person name="Ormond D."/>
            <person name="Price C."/>
            <person name="Rabbinowitsch E."/>
            <person name="Rutter S."/>
            <person name="Sanders M."/>
            <person name="Saunders D."/>
            <person name="Seeger K."/>
            <person name="Sharp S."/>
            <person name="Simmonds M."/>
            <person name="Skelton J."/>
            <person name="Squares R."/>
            <person name="Squares S."/>
            <person name="Stevens K."/>
            <person name="Unwin L."/>
            <person name="Whitehead S."/>
            <person name="Barrell B.G."/>
            <person name="Maskell D.J."/>
        </authorList>
    </citation>
    <scope>NUCLEOTIDE SEQUENCE [LARGE SCALE GENOMIC DNA]</scope>
    <source>
        <strain>12822 / ATCC BAA-587 / NCTC 13253</strain>
    </source>
</reference>
<reference key="2">
    <citation type="journal article" date="1987" name="J. Bacteriol.">
        <title>Bordetella parapertussis and Bordetella bronchiseptica contain transcriptionally silent pertussis toxin genes.</title>
        <authorList>
            <person name="Arico B."/>
            <person name="Rappuoli R."/>
        </authorList>
    </citation>
    <scope>TRANSCRIPTIONAL SILENCING</scope>
    <source>
        <strain>ATCC 9305</strain>
    </source>
</reference>
<reference key="3">
    <citation type="journal article" date="1996" name="Infect. Immun.">
        <title>Analysis of proteins encoded by the ptx and ptl genes of Bordetella bronchiseptica and Bordetella parapertussis.</title>
        <authorList>
            <person name="Hausman S.Z."/>
            <person name="Cherry J.D."/>
            <person name="Heininger U."/>
            <person name="Wirsing von Koenig C.H."/>
            <person name="Burns D.L."/>
        </authorList>
    </citation>
    <scope>POSSIBLE EXPRESSION OF PTL AND PTX PROTEINS UNDER CONDITIONS DIFFERENT FROM B.PERTUSSIS EXPRESSION CONDITIONS</scope>
    <source>
        <strain>10978</strain>
        <strain>13449</strain>
    </source>
</reference>
<comment type="subcellular location">
    <subcellularLocation>
        <location evidence="2">Cell membrane</location>
        <topology evidence="2">Multi-pass membrane protein</topology>
    </subcellularLocation>
</comment>
<comment type="similarity">
    <text evidence="2">Belongs to the PtlA family.</text>
</comment>
<comment type="caution">
    <text evidence="2">B.parapertussis and B.bronchiseptica seem not to produce the pertussis toxin (S1, S2, S4, S5 and S3) and ptl proteins (PtlA, PtlB, PtlC, PtlD, PtlE, PtlF, PtlG, PtlH and PtlI) in vivo due to changes in the promoter region of the ptx-ptl operon. However, it is possible that their promoter is active under certain, as-yet-undefined conditions and that B.parapertussis and B.bronchiseptica are therefore capable of producing these proteins.</text>
</comment>
<gene>
    <name type="primary">ptlA</name>
    <name type="ordered locus">BPP4309</name>
</gene>
<protein>
    <recommendedName>
        <fullName>Type IV secretion system protein PtlA homolog</fullName>
    </recommendedName>
</protein>
<accession>Q7W2U5</accession>
<feature type="signal peptide" evidence="1">
    <location>
        <begin position="1"/>
        <end position="33"/>
    </location>
</feature>
<feature type="chain" id="PRO_0000287402" description="Type IV secretion system protein PtlA homolog">
    <location>
        <begin position="34"/>
        <end position="102"/>
    </location>
</feature>
<feature type="transmembrane region" description="Helical" evidence="1">
    <location>
        <begin position="47"/>
        <end position="67"/>
    </location>
</feature>
<feature type="transmembrane region" description="Helical" evidence="1">
    <location>
        <begin position="77"/>
        <end position="97"/>
    </location>
</feature>